<dbReference type="EC" id="1.17.7.3" evidence="1"/>
<dbReference type="EMBL" id="AP010918">
    <property type="protein sequence ID" value="BAH27163.1"/>
    <property type="molecule type" value="Genomic_DNA"/>
</dbReference>
<dbReference type="RefSeq" id="WP_003899517.1">
    <property type="nucleotide sequence ID" value="NZ_CP014566.1"/>
</dbReference>
<dbReference type="SMR" id="C1AFY4"/>
<dbReference type="KEGG" id="mbt:JTY_2885"/>
<dbReference type="HOGENOM" id="CLU_042258_0_0_11"/>
<dbReference type="UniPathway" id="UPA00056">
    <property type="reaction ID" value="UER00096"/>
</dbReference>
<dbReference type="GO" id="GO:0051539">
    <property type="term" value="F:4 iron, 4 sulfur cluster binding"/>
    <property type="evidence" value="ECO:0007669"/>
    <property type="project" value="UniProtKB-UniRule"/>
</dbReference>
<dbReference type="GO" id="GO:0046429">
    <property type="term" value="F:4-hydroxy-3-methylbut-2-en-1-yl diphosphate synthase activity (ferredoxin)"/>
    <property type="evidence" value="ECO:0007669"/>
    <property type="project" value="UniProtKB-UniRule"/>
</dbReference>
<dbReference type="GO" id="GO:0141197">
    <property type="term" value="F:4-hydroxy-3-methylbut-2-enyl-diphosphate synthase activity (flavodoxin)"/>
    <property type="evidence" value="ECO:0007669"/>
    <property type="project" value="UniProtKB-EC"/>
</dbReference>
<dbReference type="GO" id="GO:0005506">
    <property type="term" value="F:iron ion binding"/>
    <property type="evidence" value="ECO:0007669"/>
    <property type="project" value="InterPro"/>
</dbReference>
<dbReference type="GO" id="GO:0019288">
    <property type="term" value="P:isopentenyl diphosphate biosynthetic process, methylerythritol 4-phosphate pathway"/>
    <property type="evidence" value="ECO:0007669"/>
    <property type="project" value="UniProtKB-UniRule"/>
</dbReference>
<dbReference type="GO" id="GO:0016114">
    <property type="term" value="P:terpenoid biosynthetic process"/>
    <property type="evidence" value="ECO:0007669"/>
    <property type="project" value="InterPro"/>
</dbReference>
<dbReference type="FunFam" id="3.20.20.20:FF:000003">
    <property type="entry name" value="4-hydroxy-3-methylbut-2-en-1-yl diphosphate synthase (flavodoxin)"/>
    <property type="match status" value="1"/>
</dbReference>
<dbReference type="FunFam" id="3.30.413.10:FF:000001">
    <property type="entry name" value="4-hydroxy-3-methylbut-2-en-1-yl diphosphate synthase (flavodoxin)"/>
    <property type="match status" value="1"/>
</dbReference>
<dbReference type="Gene3D" id="3.20.20.20">
    <property type="entry name" value="Dihydropteroate synthase-like"/>
    <property type="match status" value="1"/>
</dbReference>
<dbReference type="Gene3D" id="3.30.413.10">
    <property type="entry name" value="Sulfite Reductase Hemoprotein, domain 1"/>
    <property type="match status" value="1"/>
</dbReference>
<dbReference type="HAMAP" id="MF_00159">
    <property type="entry name" value="IspG"/>
    <property type="match status" value="1"/>
</dbReference>
<dbReference type="InterPro" id="IPR011005">
    <property type="entry name" value="Dihydropteroate_synth-like_sf"/>
</dbReference>
<dbReference type="InterPro" id="IPR016425">
    <property type="entry name" value="IspG_bac"/>
</dbReference>
<dbReference type="InterPro" id="IPR004588">
    <property type="entry name" value="IspG_bac-typ"/>
</dbReference>
<dbReference type="InterPro" id="IPR045854">
    <property type="entry name" value="NO2/SO3_Rdtase_4Fe4S_sf"/>
</dbReference>
<dbReference type="NCBIfam" id="TIGR00612">
    <property type="entry name" value="ispG_gcpE"/>
    <property type="match status" value="1"/>
</dbReference>
<dbReference type="NCBIfam" id="NF001540">
    <property type="entry name" value="PRK00366.1"/>
    <property type="match status" value="1"/>
</dbReference>
<dbReference type="PANTHER" id="PTHR30454">
    <property type="entry name" value="4-HYDROXY-3-METHYLBUT-2-EN-1-YL DIPHOSPHATE SYNTHASE"/>
    <property type="match status" value="1"/>
</dbReference>
<dbReference type="PANTHER" id="PTHR30454:SF0">
    <property type="entry name" value="4-HYDROXY-3-METHYLBUT-2-EN-1-YL DIPHOSPHATE SYNTHASE (FERREDOXIN), CHLOROPLASTIC"/>
    <property type="match status" value="1"/>
</dbReference>
<dbReference type="Pfam" id="PF04551">
    <property type="entry name" value="GcpE"/>
    <property type="match status" value="1"/>
</dbReference>
<dbReference type="PIRSF" id="PIRSF004640">
    <property type="entry name" value="IspG"/>
    <property type="match status" value="1"/>
</dbReference>
<dbReference type="SUPFAM" id="SSF51717">
    <property type="entry name" value="Dihydropteroate synthetase-like"/>
    <property type="match status" value="1"/>
</dbReference>
<dbReference type="SUPFAM" id="SSF56014">
    <property type="entry name" value="Nitrite and sulphite reductase 4Fe-4S domain-like"/>
    <property type="match status" value="1"/>
</dbReference>
<name>ISPG_MYCBT</name>
<feature type="chain" id="PRO_1000123453" description="4-hydroxy-3-methylbut-2-en-1-yl diphosphate synthase (flavodoxin)">
    <location>
        <begin position="1"/>
        <end position="387"/>
    </location>
</feature>
<feature type="binding site" evidence="1">
    <location>
        <position position="280"/>
    </location>
    <ligand>
        <name>[4Fe-4S] cluster</name>
        <dbReference type="ChEBI" id="CHEBI:49883"/>
    </ligand>
</feature>
<feature type="binding site" evidence="1">
    <location>
        <position position="283"/>
    </location>
    <ligand>
        <name>[4Fe-4S] cluster</name>
        <dbReference type="ChEBI" id="CHEBI:49883"/>
    </ligand>
</feature>
<feature type="binding site" evidence="1">
    <location>
        <position position="315"/>
    </location>
    <ligand>
        <name>[4Fe-4S] cluster</name>
        <dbReference type="ChEBI" id="CHEBI:49883"/>
    </ligand>
</feature>
<feature type="binding site" evidence="1">
    <location>
        <position position="322"/>
    </location>
    <ligand>
        <name>[4Fe-4S] cluster</name>
        <dbReference type="ChEBI" id="CHEBI:49883"/>
    </ligand>
</feature>
<evidence type="ECO:0000255" key="1">
    <source>
        <dbReference type="HAMAP-Rule" id="MF_00159"/>
    </source>
</evidence>
<sequence length="387" mass="40482">MTVGLGMPQPPAPTLAPRRATRQLMVGNVGVGSDHPVSVQSMCTTKTHDVNSTLQQIAELTAAGCDIVRVACPRQEDADALAEIARHSQIPVVADIHFQPRYIFAAIDAGCAAVRVNPGNIKEFDGRVGEVAKAAGAAGIPIRIGVNAGSLDKRFMEKYGKATPEALVESALWEASLFEEHGFGDIKISVKHNDPVVMVAAYELLAARCDYPLHLGVTEAGPAFQGTIKSAVAFGALLSRGIGDTIRVSLSAPPVEEVKVGNQVLESLNLRPRSLEIVSCPSCGRAQVDVYTLANEVTAGLDGLDVPLRVAVMGCVVNGPGEAREADLGVASGNGKGQIFVRGEVIKTVPEAQIVETLIEEAMRLAAEMGEQDPGATPSGSPIVTVS</sequence>
<protein>
    <recommendedName>
        <fullName evidence="1">4-hydroxy-3-methylbut-2-en-1-yl diphosphate synthase (flavodoxin)</fullName>
        <ecNumber evidence="1">1.17.7.3</ecNumber>
    </recommendedName>
    <alternativeName>
        <fullName evidence="1">1-hydroxy-2-methyl-2-(E)-butenyl 4-diphosphate synthase</fullName>
    </alternativeName>
</protein>
<proteinExistence type="inferred from homology"/>
<accession>C1AFY4</accession>
<organism>
    <name type="scientific">Mycobacterium bovis (strain BCG / Tokyo 172 / ATCC 35737 / TMC 1019)</name>
    <dbReference type="NCBI Taxonomy" id="561275"/>
    <lineage>
        <taxon>Bacteria</taxon>
        <taxon>Bacillati</taxon>
        <taxon>Actinomycetota</taxon>
        <taxon>Actinomycetes</taxon>
        <taxon>Mycobacteriales</taxon>
        <taxon>Mycobacteriaceae</taxon>
        <taxon>Mycobacterium</taxon>
        <taxon>Mycobacterium tuberculosis complex</taxon>
    </lineage>
</organism>
<keyword id="KW-0004">4Fe-4S</keyword>
<keyword id="KW-0408">Iron</keyword>
<keyword id="KW-0411">Iron-sulfur</keyword>
<keyword id="KW-0414">Isoprene biosynthesis</keyword>
<keyword id="KW-0479">Metal-binding</keyword>
<keyword id="KW-0560">Oxidoreductase</keyword>
<gene>
    <name evidence="1" type="primary">ispG</name>
    <name type="ordered locus">JTY_2885</name>
</gene>
<comment type="function">
    <text evidence="1">Converts 2C-methyl-D-erythritol 2,4-cyclodiphosphate (ME-2,4cPP) into 1-hydroxy-2-methyl-2-(E)-butenyl 4-diphosphate.</text>
</comment>
<comment type="catalytic activity">
    <reaction evidence="1">
        <text>(2E)-4-hydroxy-3-methylbut-2-enyl diphosphate + oxidized [flavodoxin] + H2O + 2 H(+) = 2-C-methyl-D-erythritol 2,4-cyclic diphosphate + reduced [flavodoxin]</text>
        <dbReference type="Rhea" id="RHEA:43604"/>
        <dbReference type="Rhea" id="RHEA-COMP:10622"/>
        <dbReference type="Rhea" id="RHEA-COMP:10623"/>
        <dbReference type="ChEBI" id="CHEBI:15377"/>
        <dbReference type="ChEBI" id="CHEBI:15378"/>
        <dbReference type="ChEBI" id="CHEBI:57618"/>
        <dbReference type="ChEBI" id="CHEBI:58210"/>
        <dbReference type="ChEBI" id="CHEBI:58483"/>
        <dbReference type="ChEBI" id="CHEBI:128753"/>
        <dbReference type="EC" id="1.17.7.3"/>
    </reaction>
</comment>
<comment type="cofactor">
    <cofactor evidence="1">
        <name>[4Fe-4S] cluster</name>
        <dbReference type="ChEBI" id="CHEBI:49883"/>
    </cofactor>
    <text evidence="1">Binds 1 [4Fe-4S] cluster.</text>
</comment>
<comment type="pathway">
    <text evidence="1">Isoprenoid biosynthesis; isopentenyl diphosphate biosynthesis via DXP pathway; isopentenyl diphosphate from 1-deoxy-D-xylulose 5-phosphate: step 5/6.</text>
</comment>
<comment type="similarity">
    <text evidence="1">Belongs to the IspG family.</text>
</comment>
<reference key="1">
    <citation type="journal article" date="2009" name="Vaccine">
        <title>Whole genome sequence analysis of Mycobacterium bovis bacillus Calmette-Guerin (BCG) Tokyo 172: a comparative study of BCG vaccine substrains.</title>
        <authorList>
            <person name="Seki M."/>
            <person name="Honda I."/>
            <person name="Fujita I."/>
            <person name="Yano I."/>
            <person name="Yamamoto S."/>
            <person name="Koyama A."/>
        </authorList>
    </citation>
    <scope>NUCLEOTIDE SEQUENCE [LARGE SCALE GENOMIC DNA]</scope>
    <source>
        <strain>BCG / Tokyo 172 / ATCC 35737 / TMC 1019</strain>
    </source>
</reference>